<reference key="1">
    <citation type="journal article" date="2007" name="Genome Res.">
        <title>Reductive evolution and niche adaptation inferred from the genome of Mycobacterium ulcerans, the causative agent of Buruli ulcer.</title>
        <authorList>
            <person name="Stinear T.P."/>
            <person name="Seemann T."/>
            <person name="Pidot S."/>
            <person name="Frigui W."/>
            <person name="Reysset G."/>
            <person name="Garnier T."/>
            <person name="Meurice G."/>
            <person name="Simon D."/>
            <person name="Bouchier C."/>
            <person name="Ma L."/>
            <person name="Tichit M."/>
            <person name="Porter J.L."/>
            <person name="Ryan J."/>
            <person name="Johnson P.D.R."/>
            <person name="Davies J.K."/>
            <person name="Jenkin G.A."/>
            <person name="Small P.L.C."/>
            <person name="Jones L.M."/>
            <person name="Tekaia F."/>
            <person name="Laval F."/>
            <person name="Daffe M."/>
            <person name="Parkhill J."/>
            <person name="Cole S.T."/>
        </authorList>
    </citation>
    <scope>NUCLEOTIDE SEQUENCE [LARGE SCALE GENOMIC DNA]</scope>
    <source>
        <strain>Agy99</strain>
    </source>
</reference>
<proteinExistence type="inferred from homology"/>
<organism>
    <name type="scientific">Mycobacterium ulcerans (strain Agy99)</name>
    <dbReference type="NCBI Taxonomy" id="362242"/>
    <lineage>
        <taxon>Bacteria</taxon>
        <taxon>Bacillati</taxon>
        <taxon>Actinomycetota</taxon>
        <taxon>Actinomycetes</taxon>
        <taxon>Mycobacteriales</taxon>
        <taxon>Mycobacteriaceae</taxon>
        <taxon>Mycobacterium</taxon>
        <taxon>Mycobacterium ulcerans group</taxon>
    </lineage>
</organism>
<name>RECA_MYCUA</name>
<feature type="chain" id="PRO_1000047948" description="Protein RecA">
    <location>
        <begin position="1"/>
        <end position="346"/>
    </location>
</feature>
<feature type="binding site" evidence="1">
    <location>
        <begin position="67"/>
        <end position="74"/>
    </location>
    <ligand>
        <name>ATP</name>
        <dbReference type="ChEBI" id="CHEBI:30616"/>
    </ligand>
</feature>
<sequence>MAQAPDREKALELAMAQIEKSYGKGSVMRLGDEVRQPISIIPTGSIALDVALGIGGLPRGRVIEIYGPESSGKTTVALHAVANAQAAGGVAAFIDAEHALDPEYAKKLGVDTDSLLVSQPDTGEQALEIVDMLIRSGALDIVVIDSVAALVPRAELEGEMGDSHVGLQARLMSQALRKMTGALNNSGTTAIFINQLRDKIGVMFGSPETTTGGKALKFYASVRMDVRRIETLKDGTNAVGNRTRVKIVKNKVSPPFKQAEFDILYGRGISREGSLIDMGVDQGFIRKSGAWFTYEGEQLGQGKENARNFLLENGGVANEIEKKIKEKLGIGAVVTDDGVLPAPVDF</sequence>
<gene>
    <name evidence="1" type="primary">recA</name>
    <name type="ordered locus">MUL_3380</name>
</gene>
<evidence type="ECO:0000255" key="1">
    <source>
        <dbReference type="HAMAP-Rule" id="MF_00268"/>
    </source>
</evidence>
<protein>
    <recommendedName>
        <fullName evidence="1">Protein RecA</fullName>
    </recommendedName>
    <alternativeName>
        <fullName evidence="1">Recombinase A</fullName>
    </alternativeName>
</protein>
<dbReference type="EMBL" id="CP000325">
    <property type="protein sequence ID" value="ABL05558.1"/>
    <property type="molecule type" value="Genomic_DNA"/>
</dbReference>
<dbReference type="RefSeq" id="WP_011741166.1">
    <property type="nucleotide sequence ID" value="NC_008611.1"/>
</dbReference>
<dbReference type="SMR" id="A0PT89"/>
<dbReference type="KEGG" id="mul:MUL_3380"/>
<dbReference type="eggNOG" id="COG0468">
    <property type="taxonomic scope" value="Bacteria"/>
</dbReference>
<dbReference type="HOGENOM" id="CLU_040469_3_2_11"/>
<dbReference type="Proteomes" id="UP000000765">
    <property type="component" value="Chromosome"/>
</dbReference>
<dbReference type="GO" id="GO:0005829">
    <property type="term" value="C:cytosol"/>
    <property type="evidence" value="ECO:0007669"/>
    <property type="project" value="TreeGrafter"/>
</dbReference>
<dbReference type="GO" id="GO:0005524">
    <property type="term" value="F:ATP binding"/>
    <property type="evidence" value="ECO:0007669"/>
    <property type="project" value="UniProtKB-UniRule"/>
</dbReference>
<dbReference type="GO" id="GO:0016887">
    <property type="term" value="F:ATP hydrolysis activity"/>
    <property type="evidence" value="ECO:0007669"/>
    <property type="project" value="InterPro"/>
</dbReference>
<dbReference type="GO" id="GO:0140664">
    <property type="term" value="F:ATP-dependent DNA damage sensor activity"/>
    <property type="evidence" value="ECO:0007669"/>
    <property type="project" value="InterPro"/>
</dbReference>
<dbReference type="GO" id="GO:0003684">
    <property type="term" value="F:damaged DNA binding"/>
    <property type="evidence" value="ECO:0007669"/>
    <property type="project" value="UniProtKB-UniRule"/>
</dbReference>
<dbReference type="GO" id="GO:0003697">
    <property type="term" value="F:single-stranded DNA binding"/>
    <property type="evidence" value="ECO:0007669"/>
    <property type="project" value="UniProtKB-UniRule"/>
</dbReference>
<dbReference type="GO" id="GO:0006310">
    <property type="term" value="P:DNA recombination"/>
    <property type="evidence" value="ECO:0007669"/>
    <property type="project" value="UniProtKB-UniRule"/>
</dbReference>
<dbReference type="GO" id="GO:0006281">
    <property type="term" value="P:DNA repair"/>
    <property type="evidence" value="ECO:0007669"/>
    <property type="project" value="UniProtKB-UniRule"/>
</dbReference>
<dbReference type="GO" id="GO:0009432">
    <property type="term" value="P:SOS response"/>
    <property type="evidence" value="ECO:0007669"/>
    <property type="project" value="UniProtKB-UniRule"/>
</dbReference>
<dbReference type="CDD" id="cd00983">
    <property type="entry name" value="RecA"/>
    <property type="match status" value="1"/>
</dbReference>
<dbReference type="FunFam" id="3.40.50.300:FF:002436">
    <property type="entry name" value="Protein RecA"/>
    <property type="match status" value="1"/>
</dbReference>
<dbReference type="Gene3D" id="3.40.50.300">
    <property type="entry name" value="P-loop containing nucleotide triphosphate hydrolases"/>
    <property type="match status" value="1"/>
</dbReference>
<dbReference type="HAMAP" id="MF_00268">
    <property type="entry name" value="RecA"/>
    <property type="match status" value="1"/>
</dbReference>
<dbReference type="InterPro" id="IPR003593">
    <property type="entry name" value="AAA+_ATPase"/>
</dbReference>
<dbReference type="InterPro" id="IPR013765">
    <property type="entry name" value="DNA_recomb/repair_RecA"/>
</dbReference>
<dbReference type="InterPro" id="IPR020584">
    <property type="entry name" value="DNA_recomb/repair_RecA_CS"/>
</dbReference>
<dbReference type="InterPro" id="IPR027417">
    <property type="entry name" value="P-loop_NTPase"/>
</dbReference>
<dbReference type="InterPro" id="IPR049261">
    <property type="entry name" value="RecA-like_C"/>
</dbReference>
<dbReference type="InterPro" id="IPR049428">
    <property type="entry name" value="RecA-like_N"/>
</dbReference>
<dbReference type="InterPro" id="IPR020588">
    <property type="entry name" value="RecA_ATP-bd"/>
</dbReference>
<dbReference type="InterPro" id="IPR023400">
    <property type="entry name" value="RecA_C_sf"/>
</dbReference>
<dbReference type="InterPro" id="IPR020587">
    <property type="entry name" value="RecA_monomer-monomer_interface"/>
</dbReference>
<dbReference type="NCBIfam" id="TIGR02012">
    <property type="entry name" value="tigrfam_recA"/>
    <property type="match status" value="1"/>
</dbReference>
<dbReference type="PANTHER" id="PTHR45900:SF1">
    <property type="entry name" value="MITOCHONDRIAL DNA REPAIR PROTEIN RECA HOMOLOG-RELATED"/>
    <property type="match status" value="1"/>
</dbReference>
<dbReference type="PANTHER" id="PTHR45900">
    <property type="entry name" value="RECA"/>
    <property type="match status" value="1"/>
</dbReference>
<dbReference type="Pfam" id="PF00154">
    <property type="entry name" value="RecA"/>
    <property type="match status" value="1"/>
</dbReference>
<dbReference type="Pfam" id="PF21096">
    <property type="entry name" value="RecA_C"/>
    <property type="match status" value="1"/>
</dbReference>
<dbReference type="PRINTS" id="PR00142">
    <property type="entry name" value="RECA"/>
</dbReference>
<dbReference type="SMART" id="SM00382">
    <property type="entry name" value="AAA"/>
    <property type="match status" value="1"/>
</dbReference>
<dbReference type="SUPFAM" id="SSF52540">
    <property type="entry name" value="P-loop containing nucleoside triphosphate hydrolases"/>
    <property type="match status" value="1"/>
</dbReference>
<dbReference type="SUPFAM" id="SSF54752">
    <property type="entry name" value="RecA protein, C-terminal domain"/>
    <property type="match status" value="1"/>
</dbReference>
<dbReference type="PROSITE" id="PS00321">
    <property type="entry name" value="RECA_1"/>
    <property type="match status" value="1"/>
</dbReference>
<dbReference type="PROSITE" id="PS50162">
    <property type="entry name" value="RECA_2"/>
    <property type="match status" value="1"/>
</dbReference>
<dbReference type="PROSITE" id="PS50163">
    <property type="entry name" value="RECA_3"/>
    <property type="match status" value="1"/>
</dbReference>
<accession>A0PT89</accession>
<keyword id="KW-0067">ATP-binding</keyword>
<keyword id="KW-0963">Cytoplasm</keyword>
<keyword id="KW-0227">DNA damage</keyword>
<keyword id="KW-0233">DNA recombination</keyword>
<keyword id="KW-0234">DNA repair</keyword>
<keyword id="KW-0238">DNA-binding</keyword>
<keyword id="KW-0547">Nucleotide-binding</keyword>
<keyword id="KW-0742">SOS response</keyword>
<comment type="function">
    <text evidence="1">Can catalyze the hydrolysis of ATP in the presence of single-stranded DNA, the ATP-dependent uptake of single-stranded DNA by duplex DNA, and the ATP-dependent hybridization of homologous single-stranded DNAs. It interacts with LexA causing its activation and leading to its autocatalytic cleavage.</text>
</comment>
<comment type="subcellular location">
    <subcellularLocation>
        <location evidence="1">Cytoplasm</location>
    </subcellularLocation>
</comment>
<comment type="similarity">
    <text evidence="1">Belongs to the RecA family.</text>
</comment>